<protein>
    <recommendedName>
        <fullName evidence="8">Protein LEO1 homolog</fullName>
    </recommendedName>
    <alternativeName>
        <fullName evidence="7">Protein VERNALIZATION INDEPENDENCE 4</fullName>
    </alternativeName>
</protein>
<name>VIP4_ARATH</name>
<sequence length="625" mass="71758">MVKGEKRSEMMLNLFGDNSEEEEIESEHECNRRQPNYASDEAEGGVEPEGEGEAEVEVHGEAEAESDGEQGDVELDPGESEGEREQSSQEADPQEESEARDSDSDNKEEEHGGRVAKKRRQEVVESGSERSGEKHYESEDEEVDQTRSPRSPSEEKEEVQVAQSDVNIRNVFGSSDDEDAEEYVRNDVEQDEHRSPIEDEEGSEKDLRPDDMVLDDIIPEEDPQYESEAEHVEARYRERPVGPPLEVEVPFRPPPGDPVKMNMIKVSNIMGIDPKPFDAKTFVEEDTFMTDEPGAKNRIRLDNNIVRHRFVKSRDGKTYSESNARFVRWSDGSLQLLIGNEVLNITEQDAKEDQNHLFIKHEKGILQSQGRILKKMRFTPSSLTSNSHRLLTAIVESRQKKAFKVKNCVTDIDPEREKEKREKAESQNLKASTKLSQAREKIKRKYPLPVERRQLSTGYLEDALDEDDEDYRSNRGYEEDLEAEAQRERRILNAKKSHKGIPGRSSMTSARPSRRQMEYSESEREESEYETEEEEEEKSPARGRGKDSEDEYEEDAEEDEEERGKSNRYSDEDEEEEEVAGGRAEKDHRGSGRKRKGIESDEEESPPRKAPTHRRKAVIDDSDED</sequence>
<evidence type="ECO:0000255" key="1"/>
<evidence type="ECO:0000256" key="2">
    <source>
        <dbReference type="SAM" id="MobiDB-lite"/>
    </source>
</evidence>
<evidence type="ECO:0000269" key="3">
    <source>
    </source>
</evidence>
<evidence type="ECO:0000269" key="4">
    <source>
    </source>
</evidence>
<evidence type="ECO:0000269" key="5">
    <source>
    </source>
</evidence>
<evidence type="ECO:0000269" key="6">
    <source>
    </source>
</evidence>
<evidence type="ECO:0000303" key="7">
    <source>
    </source>
</evidence>
<evidence type="ECO:0000305" key="8"/>
<evidence type="ECO:0000312" key="9">
    <source>
        <dbReference type="Araport" id="AT5G61150"/>
    </source>
</evidence>
<evidence type="ECO:0000312" key="10">
    <source>
        <dbReference type="EMBL" id="BAB10377.1"/>
    </source>
</evidence>
<evidence type="ECO:0007744" key="11">
    <source>
    </source>
</evidence>
<evidence type="ECO:0007744" key="12">
    <source>
    </source>
</evidence>
<evidence type="ECO:0007744" key="13">
    <source>
    </source>
</evidence>
<keyword id="KW-0025">Alternative splicing</keyword>
<keyword id="KW-0175">Coiled coil</keyword>
<keyword id="KW-0287">Flowering</keyword>
<keyword id="KW-0539">Nucleus</keyword>
<keyword id="KW-0597">Phosphoprotein</keyword>
<keyword id="KW-1185">Reference proteome</keyword>
<keyword id="KW-0804">Transcription</keyword>
<keyword id="KW-0805">Transcription regulation</keyword>
<proteinExistence type="evidence at protein level"/>
<dbReference type="EMBL" id="AF490422">
    <property type="protein sequence ID" value="AAM81969.1"/>
    <property type="molecule type" value="mRNA"/>
</dbReference>
<dbReference type="EMBL" id="AB006696">
    <property type="protein sequence ID" value="BAB10377.1"/>
    <property type="molecule type" value="Genomic_DNA"/>
</dbReference>
<dbReference type="EMBL" id="CP002688">
    <property type="protein sequence ID" value="AED97427.1"/>
    <property type="molecule type" value="Genomic_DNA"/>
</dbReference>
<dbReference type="EMBL" id="BT002058">
    <property type="protein sequence ID" value="AAN72069.1"/>
    <property type="molecule type" value="mRNA"/>
</dbReference>
<dbReference type="EMBL" id="BT008386">
    <property type="protein sequence ID" value="AAP37745.1"/>
    <property type="molecule type" value="mRNA"/>
</dbReference>
<dbReference type="EMBL" id="AK316687">
    <property type="protein sequence ID" value="BAH19414.1"/>
    <property type="molecule type" value="mRNA"/>
</dbReference>
<dbReference type="RefSeq" id="NP_851237.1">
    <molecule id="Q9FNQ0-1"/>
    <property type="nucleotide sequence ID" value="NM_180906.2"/>
</dbReference>
<dbReference type="FunCoup" id="Q9FNQ0">
    <property type="interactions" value="2124"/>
</dbReference>
<dbReference type="IntAct" id="Q9FNQ0">
    <property type="interactions" value="2"/>
</dbReference>
<dbReference type="STRING" id="3702.Q9FNQ0"/>
<dbReference type="iPTMnet" id="Q9FNQ0"/>
<dbReference type="PaxDb" id="3702-AT5G61150.1"/>
<dbReference type="ProteomicsDB" id="234262">
    <molecule id="Q9FNQ0-1"/>
</dbReference>
<dbReference type="EnsemblPlants" id="AT5G61150.1">
    <molecule id="Q9FNQ0-1"/>
    <property type="protein sequence ID" value="AT5G61150.1"/>
    <property type="gene ID" value="AT5G61150"/>
</dbReference>
<dbReference type="GeneID" id="836236"/>
<dbReference type="Gramene" id="AT5G61150.1">
    <molecule id="Q9FNQ0-1"/>
    <property type="protein sequence ID" value="AT5G61150.1"/>
    <property type="gene ID" value="AT5G61150"/>
</dbReference>
<dbReference type="KEGG" id="ath:AT5G61150"/>
<dbReference type="Araport" id="AT5G61150"/>
<dbReference type="TAIR" id="AT5G61150">
    <property type="gene designation" value="VIP4"/>
</dbReference>
<dbReference type="eggNOG" id="KOG2428">
    <property type="taxonomic scope" value="Eukaryota"/>
</dbReference>
<dbReference type="InParanoid" id="Q9FNQ0"/>
<dbReference type="PhylomeDB" id="Q9FNQ0"/>
<dbReference type="PRO" id="PR:Q9FNQ0"/>
<dbReference type="Proteomes" id="UP000006548">
    <property type="component" value="Chromosome 5"/>
</dbReference>
<dbReference type="ExpressionAtlas" id="Q9FNQ0">
    <property type="expression patterns" value="baseline and differential"/>
</dbReference>
<dbReference type="GO" id="GO:0016593">
    <property type="term" value="C:Cdc73/Paf1 complex"/>
    <property type="evidence" value="ECO:0000314"/>
    <property type="project" value="UniProtKB"/>
</dbReference>
<dbReference type="GO" id="GO:0005634">
    <property type="term" value="C:nucleus"/>
    <property type="evidence" value="ECO:0000314"/>
    <property type="project" value="UniProtKB"/>
</dbReference>
<dbReference type="GO" id="GO:0009908">
    <property type="term" value="P:flower development"/>
    <property type="evidence" value="ECO:0007669"/>
    <property type="project" value="UniProtKB-KW"/>
</dbReference>
<dbReference type="GO" id="GO:0009910">
    <property type="term" value="P:negative regulation of flower development"/>
    <property type="evidence" value="ECO:0000315"/>
    <property type="project" value="TAIR"/>
</dbReference>
<dbReference type="GO" id="GO:0006368">
    <property type="term" value="P:transcription elongation by RNA polymerase II"/>
    <property type="evidence" value="ECO:0007669"/>
    <property type="project" value="InterPro"/>
</dbReference>
<dbReference type="GO" id="GO:0010048">
    <property type="term" value="P:vernalization response"/>
    <property type="evidence" value="ECO:0000315"/>
    <property type="project" value="TAIR"/>
</dbReference>
<dbReference type="InterPro" id="IPR007149">
    <property type="entry name" value="Leo1"/>
</dbReference>
<dbReference type="PANTHER" id="PTHR23146">
    <property type="entry name" value="LEO1 PROTEIN"/>
    <property type="match status" value="1"/>
</dbReference>
<dbReference type="PANTHER" id="PTHR23146:SF0">
    <property type="entry name" value="RNA POLYMERASE-ASSOCIATED PROTEIN LEO1"/>
    <property type="match status" value="1"/>
</dbReference>
<dbReference type="Pfam" id="PF04004">
    <property type="entry name" value="Leo1"/>
    <property type="match status" value="1"/>
</dbReference>
<gene>
    <name evidence="7" type="primary">VIP4</name>
    <name evidence="9" type="ordered locus">At5g61150</name>
    <name evidence="10" type="ORF">MAF19.15</name>
</gene>
<organism>
    <name type="scientific">Arabidopsis thaliana</name>
    <name type="common">Mouse-ear cress</name>
    <dbReference type="NCBI Taxonomy" id="3702"/>
    <lineage>
        <taxon>Eukaryota</taxon>
        <taxon>Viridiplantae</taxon>
        <taxon>Streptophyta</taxon>
        <taxon>Embryophyta</taxon>
        <taxon>Tracheophyta</taxon>
        <taxon>Spermatophyta</taxon>
        <taxon>Magnoliopsida</taxon>
        <taxon>eudicotyledons</taxon>
        <taxon>Gunneridae</taxon>
        <taxon>Pentapetalae</taxon>
        <taxon>rosids</taxon>
        <taxon>malvids</taxon>
        <taxon>Brassicales</taxon>
        <taxon>Brassicaceae</taxon>
        <taxon>Camelineae</taxon>
        <taxon>Arabidopsis</taxon>
    </lineage>
</organism>
<accession>Q9FNQ0</accession>
<accession>B9DF97</accession>
<accession>Q8L5W5</accession>
<feature type="chain" id="PRO_0000432760" description="Protein LEO1 homolog">
    <location>
        <begin position="1"/>
        <end position="625"/>
    </location>
</feature>
<feature type="region of interest" description="Disordered" evidence="2">
    <location>
        <begin position="1"/>
        <end position="214"/>
    </location>
</feature>
<feature type="region of interest" description="Disordered" evidence="2">
    <location>
        <begin position="415"/>
        <end position="625"/>
    </location>
</feature>
<feature type="coiled-coil region" evidence="1">
    <location>
        <begin position="415"/>
        <end position="539"/>
    </location>
</feature>
<feature type="compositionally biased region" description="Acidic residues" evidence="2">
    <location>
        <begin position="40"/>
        <end position="55"/>
    </location>
</feature>
<feature type="compositionally biased region" description="Acidic residues" evidence="2">
    <location>
        <begin position="63"/>
        <end position="80"/>
    </location>
</feature>
<feature type="compositionally biased region" description="Basic and acidic residues" evidence="2">
    <location>
        <begin position="97"/>
        <end position="113"/>
    </location>
</feature>
<feature type="compositionally biased region" description="Basic and acidic residues" evidence="2">
    <location>
        <begin position="121"/>
        <end position="137"/>
    </location>
</feature>
<feature type="compositionally biased region" description="Basic and acidic residues" evidence="2">
    <location>
        <begin position="182"/>
        <end position="197"/>
    </location>
</feature>
<feature type="compositionally biased region" description="Basic and acidic residues" evidence="2">
    <location>
        <begin position="415"/>
        <end position="425"/>
    </location>
</feature>
<feature type="compositionally biased region" description="Polar residues" evidence="2">
    <location>
        <begin position="426"/>
        <end position="436"/>
    </location>
</feature>
<feature type="compositionally biased region" description="Basic and acidic residues" evidence="2">
    <location>
        <begin position="471"/>
        <end position="491"/>
    </location>
</feature>
<feature type="compositionally biased region" description="Basic residues" evidence="2">
    <location>
        <begin position="492"/>
        <end position="501"/>
    </location>
</feature>
<feature type="compositionally biased region" description="Acidic residues" evidence="2">
    <location>
        <begin position="523"/>
        <end position="537"/>
    </location>
</feature>
<feature type="compositionally biased region" description="Basic and acidic residues" evidence="2">
    <location>
        <begin position="538"/>
        <end position="547"/>
    </location>
</feature>
<feature type="compositionally biased region" description="Acidic residues" evidence="2">
    <location>
        <begin position="548"/>
        <end position="561"/>
    </location>
</feature>
<feature type="modified residue" description="Phosphoserine" evidence="11">
    <location>
        <position position="203"/>
    </location>
</feature>
<feature type="modified residue" description="Phosphoserine" evidence="12 13">
    <location>
        <position position="548"/>
    </location>
</feature>
<feature type="modified residue" description="Phosphoserine" evidence="11">
    <location>
        <position position="570"/>
    </location>
</feature>
<feature type="modified residue" description="Phosphoserine" evidence="11 12 13">
    <location>
        <position position="600"/>
    </location>
</feature>
<feature type="modified residue" description="Phosphoserine" evidence="11 12 13">
    <location>
        <position position="605"/>
    </location>
</feature>
<feature type="modified residue" description="Phosphoserine" evidence="11 13">
    <location>
        <position position="622"/>
    </location>
</feature>
<feature type="sequence conflict" description="In Ref. 1; AAM81969." evidence="8" ref="1">
    <original>E</original>
    <variation>Q</variation>
    <location>
        <position position="27"/>
    </location>
</feature>
<feature type="sequence conflict" description="In Ref. 1; AAM81969." evidence="8" ref="1">
    <original>D</original>
    <variation>H</variation>
    <location>
        <position position="206"/>
    </location>
</feature>
<feature type="sequence conflict" description="In Ref. 1; AAM81969." evidence="8" ref="1">
    <original>T</original>
    <variation>P</variation>
    <location>
        <position position="318"/>
    </location>
</feature>
<feature type="sequence conflict" description="In Ref. 1; AAM81969." evidence="8" ref="1">
    <original>N</original>
    <variation>T</variation>
    <location>
        <position position="474"/>
    </location>
</feature>
<comment type="function">
    <text evidence="3 5 6">Component of the PAF1 complex (PAF1C) which is involved in histone modifications such as methylation on histone H3 'Lys-4' (H3K4me3) (PubMed:20363855). Involved in regulation of flowering time. Required for the expression of the flowering repressor and MADS box gene FLC (PubMed:12207655). Involved in the control of seed dormancy and germination (PubMed:21799800).</text>
</comment>
<comment type="subunit">
    <text evidence="4 5">Component of the nuclear PAF1 complex (PAF1C), which consists of VIP2/ELF7/PAF1, VIP3/SKI8/WDR61, VIP4/LEO1, VIP5/RTF1, VIP6/ELF8/CTR9 and CDC73 (PubMed:20363855). Interacts with VIP3 and VIP6 (PubMed:15472079).</text>
</comment>
<comment type="subcellular location">
    <subcellularLocation>
        <location evidence="5">Nucleus</location>
    </subcellularLocation>
</comment>
<comment type="alternative products">
    <event type="alternative splicing"/>
    <isoform>
        <id>Q9FNQ0-1</id>
        <name>1</name>
        <sequence type="displayed"/>
    </isoform>
    <text evidence="8">A number of isoforms are produced. According to EST sequences.</text>
</comment>
<comment type="tissue specificity">
    <text evidence="3">Expressed in roots, shoot apices, stems, cauline leaves, inflorescence apices and flowers.</text>
</comment>
<comment type="disruption phenotype">
    <text evidence="3 6">Early flowering, defects in floral morphology in whorls 1-3, but fully fertile flowers (PubMed:12207655). Reduced seed dormancy and increased germination rate of freshly harvested seeds (PubMed:21799800).</text>
</comment>
<comment type="similarity">
    <text evidence="8">Belongs to the LEO1 family.</text>
</comment>
<reference key="1">
    <citation type="journal article" date="2002" name="Plant J.">
        <title>The VERNALIZATION INDEPENDENCE 4 gene encodes a novel regulator of FLOWERING LOCUS C.</title>
        <authorList>
            <person name="Zhang H."/>
            <person name="van Nocker S."/>
        </authorList>
    </citation>
    <scope>NUCLEOTIDE SEQUENCE [MRNA]</scope>
    <scope>FUNCTION</scope>
    <scope>TISSUE SPECIFICITY</scope>
    <scope>DISRUPTION PHENOTYPE</scope>
</reference>
<reference key="2">
    <citation type="journal article" date="1997" name="DNA Res.">
        <title>Structural analysis of Arabidopsis thaliana chromosome 5. II. Sequence features of the regions of 1,044,062 bp covered by thirteen physically assigned P1 clones.</title>
        <authorList>
            <person name="Kotani H."/>
            <person name="Nakamura Y."/>
            <person name="Sato S."/>
            <person name="Kaneko T."/>
            <person name="Asamizu E."/>
            <person name="Miyajima N."/>
            <person name="Tabata S."/>
        </authorList>
    </citation>
    <scope>NUCLEOTIDE SEQUENCE [LARGE SCALE GENOMIC DNA]</scope>
    <source>
        <strain>cv. Columbia</strain>
    </source>
</reference>
<reference key="3">
    <citation type="journal article" date="2017" name="Plant J.">
        <title>Araport11: a complete reannotation of the Arabidopsis thaliana reference genome.</title>
        <authorList>
            <person name="Cheng C.Y."/>
            <person name="Krishnakumar V."/>
            <person name="Chan A.P."/>
            <person name="Thibaud-Nissen F."/>
            <person name="Schobel S."/>
            <person name="Town C.D."/>
        </authorList>
    </citation>
    <scope>GENOME REANNOTATION</scope>
    <source>
        <strain>cv. Columbia</strain>
    </source>
</reference>
<reference key="4">
    <citation type="journal article" date="2003" name="Science">
        <title>Empirical analysis of transcriptional activity in the Arabidopsis genome.</title>
        <authorList>
            <person name="Yamada K."/>
            <person name="Lim J."/>
            <person name="Dale J.M."/>
            <person name="Chen H."/>
            <person name="Shinn P."/>
            <person name="Palm C.J."/>
            <person name="Southwick A.M."/>
            <person name="Wu H.C."/>
            <person name="Kim C.J."/>
            <person name="Nguyen M."/>
            <person name="Pham P.K."/>
            <person name="Cheuk R.F."/>
            <person name="Karlin-Newmann G."/>
            <person name="Liu S.X."/>
            <person name="Lam B."/>
            <person name="Sakano H."/>
            <person name="Wu T."/>
            <person name="Yu G."/>
            <person name="Miranda M."/>
            <person name="Quach H.L."/>
            <person name="Tripp M."/>
            <person name="Chang C.H."/>
            <person name="Lee J.M."/>
            <person name="Toriumi M.J."/>
            <person name="Chan M.M."/>
            <person name="Tang C.C."/>
            <person name="Onodera C.S."/>
            <person name="Deng J.M."/>
            <person name="Akiyama K."/>
            <person name="Ansari Y."/>
            <person name="Arakawa T."/>
            <person name="Banh J."/>
            <person name="Banno F."/>
            <person name="Bowser L."/>
            <person name="Brooks S.Y."/>
            <person name="Carninci P."/>
            <person name="Chao Q."/>
            <person name="Choy N."/>
            <person name="Enju A."/>
            <person name="Goldsmith A.D."/>
            <person name="Gurjal M."/>
            <person name="Hansen N.F."/>
            <person name="Hayashizaki Y."/>
            <person name="Johnson-Hopson C."/>
            <person name="Hsuan V.W."/>
            <person name="Iida K."/>
            <person name="Karnes M."/>
            <person name="Khan S."/>
            <person name="Koesema E."/>
            <person name="Ishida J."/>
            <person name="Jiang P.X."/>
            <person name="Jones T."/>
            <person name="Kawai J."/>
            <person name="Kamiya A."/>
            <person name="Meyers C."/>
            <person name="Nakajima M."/>
            <person name="Narusaka M."/>
            <person name="Seki M."/>
            <person name="Sakurai T."/>
            <person name="Satou M."/>
            <person name="Tamse R."/>
            <person name="Vaysberg M."/>
            <person name="Wallender E.K."/>
            <person name="Wong C."/>
            <person name="Yamamura Y."/>
            <person name="Yuan S."/>
            <person name="Shinozaki K."/>
            <person name="Davis R.W."/>
            <person name="Theologis A."/>
            <person name="Ecker J.R."/>
        </authorList>
    </citation>
    <scope>NUCLEOTIDE SEQUENCE [LARGE SCALE MRNA]</scope>
    <source>
        <strain>cv. Columbia</strain>
    </source>
</reference>
<reference key="5">
    <citation type="journal article" date="2009" name="DNA Res.">
        <title>Analysis of multiple occurrences of alternative splicing events in Arabidopsis thaliana using novel sequenced full-length cDNAs.</title>
        <authorList>
            <person name="Iida K."/>
            <person name="Fukami-Kobayashi K."/>
            <person name="Toyoda A."/>
            <person name="Sakaki Y."/>
            <person name="Kobayashi M."/>
            <person name="Seki M."/>
            <person name="Shinozaki K."/>
        </authorList>
    </citation>
    <scope>NUCLEOTIDE SEQUENCE [LARGE SCALE MRNA] OF 1-531</scope>
    <source>
        <strain>cv. Columbia</strain>
    </source>
</reference>
<reference key="6">
    <citation type="journal article" date="2004" name="Plant Cell">
        <title>A mechanism related to the yeast transcriptional regulator Paf1c is required for expression of the Arabidopsis FLC/MAF MADS box gene family.</title>
        <authorList>
            <person name="Oh S."/>
            <person name="Zhang H."/>
            <person name="Ludwig P."/>
            <person name="van Nocker S."/>
        </authorList>
    </citation>
    <scope>INTERACTION WITH VIP3 AND VIP6</scope>
</reference>
<reference key="7">
    <citation type="journal article" date="2008" name="J. Proteome Res.">
        <title>Site-specific phosphorylation profiling of Arabidopsis proteins by mass spectrometry and peptide chip analysis.</title>
        <authorList>
            <person name="de la Fuente van Bentem S."/>
            <person name="Anrather D."/>
            <person name="Dohnal I."/>
            <person name="Roitinger E."/>
            <person name="Csaszar E."/>
            <person name="Joore J."/>
            <person name="Buijnink J."/>
            <person name="Carreri A."/>
            <person name="Forzani C."/>
            <person name="Lorkovic Z.J."/>
            <person name="Barta A."/>
            <person name="Lecourieux D."/>
            <person name="Verhounig A."/>
            <person name="Jonak C."/>
            <person name="Hirt H."/>
        </authorList>
    </citation>
    <scope>PHOSPHORYLATION [LARGE SCALE ANALYSIS] AT SER-203; SER-570; SER-600; SER-605 AND SER-622</scope>
    <scope>IDENTIFICATION BY MASS SPECTROMETRY [LARGE SCALE ANALYSIS]</scope>
    <source>
        <tissue>Root</tissue>
    </source>
</reference>
<reference key="8">
    <citation type="journal article" date="2009" name="J. Proteomics">
        <title>Phosphoproteomic analysis of nuclei-enriched fractions from Arabidopsis thaliana.</title>
        <authorList>
            <person name="Jones A.M.E."/>
            <person name="MacLean D."/>
            <person name="Studholme D.J."/>
            <person name="Serna-Sanz A."/>
            <person name="Andreasson E."/>
            <person name="Rathjen J.P."/>
            <person name="Peck S.C."/>
        </authorList>
    </citation>
    <scope>PHOSPHORYLATION [LARGE SCALE ANALYSIS] AT SER-548; SER-600 AND SER-605</scope>
    <scope>IDENTIFICATION BY MASS SPECTROMETRY [LARGE SCALE ANALYSIS]</scope>
    <source>
        <strain>cv. Columbia</strain>
    </source>
</reference>
<reference key="9">
    <citation type="journal article" date="2009" name="Plant Physiol.">
        <title>Large-scale Arabidopsis phosphoproteome profiling reveals novel chloroplast kinase substrates and phosphorylation networks.</title>
        <authorList>
            <person name="Reiland S."/>
            <person name="Messerli G."/>
            <person name="Baerenfaller K."/>
            <person name="Gerrits B."/>
            <person name="Endler A."/>
            <person name="Grossmann J."/>
            <person name="Gruissem W."/>
            <person name="Baginsky S."/>
        </authorList>
    </citation>
    <scope>PHOSPHORYLATION [LARGE SCALE ANALYSIS] AT SER-548; SER-600; SER-605 AND SER-622</scope>
    <scope>IDENTIFICATION BY MASS SPECTROMETRY [LARGE SCALE ANALYSIS]</scope>
</reference>
<reference key="10">
    <citation type="journal article" date="2010" name="Plant Physiol.">
        <title>PLANT HOMOLOGOUS TO PARAFIBROMIN is a component of the PAF1 complex and assists in regulating expression of genes within H3K27ME3-enriched chromatin.</title>
        <authorList>
            <person name="Park S."/>
            <person name="Oh S."/>
            <person name="Ek-Ramos J."/>
            <person name="van Nocker S."/>
        </authorList>
    </citation>
    <scope>IDENTIFICATION IN THE PAF1 COMPLEX</scope>
    <scope>FUNCTION</scope>
    <scope>SUBCELLULAR LOCATION</scope>
</reference>
<reference key="11">
    <citation type="journal article" date="2011" name="PLoS ONE">
        <title>Identification of the Arabidopsis REDUCED DORMANCY 2 gene uncovers a role for the polymerase associated factor 1 complex in seed dormancy.</title>
        <authorList>
            <person name="Liu Y."/>
            <person name="Geyer R."/>
            <person name="van Zanten M."/>
            <person name="Carles A."/>
            <person name="Li Y."/>
            <person name="Horold A."/>
            <person name="van Nocker S."/>
            <person name="Soppe W.J."/>
        </authorList>
    </citation>
    <scope>FUNCTION</scope>
    <scope>DISRUPTION PHENOTYPE</scope>
</reference>